<sequence length="200" mass="22767">MIINQSEFSVSAVKASQYPEGGLDEIALAGRSNVGKSSFINTLLQRKNLARTSSSPGKTQTLNFYRVDSDQADFYLVDVPGYGYAKVSKKQREEFGEMIQDYLETRAYLKGLILMIDGRHEPTVDDIAMYDYAQYLNLPILLVATKMDKIKKNAFNKTEAAFRKHLNLNKDNVTFLPFSSVTKLNVDQVKDWIQARLYEE</sequence>
<accession>Q04B34</accession>
<gene>
    <name evidence="1" type="primary">engB</name>
    <name type="ordered locus">LBUL_0712</name>
</gene>
<reference key="1">
    <citation type="journal article" date="2006" name="Proc. Natl. Acad. Sci. U.S.A.">
        <title>Comparative genomics of the lactic acid bacteria.</title>
        <authorList>
            <person name="Makarova K.S."/>
            <person name="Slesarev A."/>
            <person name="Wolf Y.I."/>
            <person name="Sorokin A."/>
            <person name="Mirkin B."/>
            <person name="Koonin E.V."/>
            <person name="Pavlov A."/>
            <person name="Pavlova N."/>
            <person name="Karamychev V."/>
            <person name="Polouchine N."/>
            <person name="Shakhova V."/>
            <person name="Grigoriev I."/>
            <person name="Lou Y."/>
            <person name="Rohksar D."/>
            <person name="Lucas S."/>
            <person name="Huang K."/>
            <person name="Goodstein D.M."/>
            <person name="Hawkins T."/>
            <person name="Plengvidhya V."/>
            <person name="Welker D."/>
            <person name="Hughes J."/>
            <person name="Goh Y."/>
            <person name="Benson A."/>
            <person name="Baldwin K."/>
            <person name="Lee J.-H."/>
            <person name="Diaz-Muniz I."/>
            <person name="Dosti B."/>
            <person name="Smeianov V."/>
            <person name="Wechter W."/>
            <person name="Barabote R."/>
            <person name="Lorca G."/>
            <person name="Altermann E."/>
            <person name="Barrangou R."/>
            <person name="Ganesan B."/>
            <person name="Xie Y."/>
            <person name="Rawsthorne H."/>
            <person name="Tamir D."/>
            <person name="Parker C."/>
            <person name="Breidt F."/>
            <person name="Broadbent J.R."/>
            <person name="Hutkins R."/>
            <person name="O'Sullivan D."/>
            <person name="Steele J."/>
            <person name="Unlu G."/>
            <person name="Saier M.H. Jr."/>
            <person name="Klaenhammer T."/>
            <person name="Richardson P."/>
            <person name="Kozyavkin S."/>
            <person name="Weimer B.C."/>
            <person name="Mills D.A."/>
        </authorList>
    </citation>
    <scope>NUCLEOTIDE SEQUENCE [LARGE SCALE GENOMIC DNA]</scope>
    <source>
        <strain>ATCC BAA-365 / Lb-18</strain>
    </source>
</reference>
<proteinExistence type="inferred from homology"/>
<comment type="function">
    <text evidence="1">Necessary for normal cell division and for the maintenance of normal septation.</text>
</comment>
<comment type="cofactor">
    <cofactor evidence="1">
        <name>Mg(2+)</name>
        <dbReference type="ChEBI" id="CHEBI:18420"/>
    </cofactor>
</comment>
<comment type="similarity">
    <text evidence="1">Belongs to the TRAFAC class TrmE-Era-EngA-EngB-Septin-like GTPase superfamily. EngB GTPase family.</text>
</comment>
<protein>
    <recommendedName>
        <fullName evidence="1">Probable GTP-binding protein EngB</fullName>
    </recommendedName>
</protein>
<evidence type="ECO:0000255" key="1">
    <source>
        <dbReference type="HAMAP-Rule" id="MF_00321"/>
    </source>
</evidence>
<feature type="chain" id="PRO_1000005824" description="Probable GTP-binding protein EngB">
    <location>
        <begin position="1"/>
        <end position="200"/>
    </location>
</feature>
<feature type="domain" description="EngB-type G" evidence="1">
    <location>
        <begin position="22"/>
        <end position="199"/>
    </location>
</feature>
<feature type="binding site" evidence="1">
    <location>
        <begin position="30"/>
        <end position="37"/>
    </location>
    <ligand>
        <name>GTP</name>
        <dbReference type="ChEBI" id="CHEBI:37565"/>
    </ligand>
</feature>
<feature type="binding site" evidence="1">
    <location>
        <position position="37"/>
    </location>
    <ligand>
        <name>Mg(2+)</name>
        <dbReference type="ChEBI" id="CHEBI:18420"/>
    </ligand>
</feature>
<feature type="binding site" evidence="1">
    <location>
        <begin position="57"/>
        <end position="61"/>
    </location>
    <ligand>
        <name>GTP</name>
        <dbReference type="ChEBI" id="CHEBI:37565"/>
    </ligand>
</feature>
<feature type="binding site" evidence="1">
    <location>
        <position position="59"/>
    </location>
    <ligand>
        <name>Mg(2+)</name>
        <dbReference type="ChEBI" id="CHEBI:18420"/>
    </ligand>
</feature>
<feature type="binding site" evidence="1">
    <location>
        <begin position="78"/>
        <end position="81"/>
    </location>
    <ligand>
        <name>GTP</name>
        <dbReference type="ChEBI" id="CHEBI:37565"/>
    </ligand>
</feature>
<feature type="binding site" evidence="1">
    <location>
        <begin position="145"/>
        <end position="148"/>
    </location>
    <ligand>
        <name>GTP</name>
        <dbReference type="ChEBI" id="CHEBI:37565"/>
    </ligand>
</feature>
<feature type="binding site" evidence="1">
    <location>
        <begin position="178"/>
        <end position="180"/>
    </location>
    <ligand>
        <name>GTP</name>
        <dbReference type="ChEBI" id="CHEBI:37565"/>
    </ligand>
</feature>
<keyword id="KW-0131">Cell cycle</keyword>
<keyword id="KW-0132">Cell division</keyword>
<keyword id="KW-0342">GTP-binding</keyword>
<keyword id="KW-0460">Magnesium</keyword>
<keyword id="KW-0479">Metal-binding</keyword>
<keyword id="KW-0547">Nucleotide-binding</keyword>
<keyword id="KW-0717">Septation</keyword>
<organism>
    <name type="scientific">Lactobacillus delbrueckii subsp. bulgaricus (strain ATCC BAA-365 / Lb-18)</name>
    <dbReference type="NCBI Taxonomy" id="321956"/>
    <lineage>
        <taxon>Bacteria</taxon>
        <taxon>Bacillati</taxon>
        <taxon>Bacillota</taxon>
        <taxon>Bacilli</taxon>
        <taxon>Lactobacillales</taxon>
        <taxon>Lactobacillaceae</taxon>
        <taxon>Lactobacillus</taxon>
    </lineage>
</organism>
<dbReference type="EMBL" id="CP000412">
    <property type="protein sequence ID" value="ABJ58338.1"/>
    <property type="molecule type" value="Genomic_DNA"/>
</dbReference>
<dbReference type="RefSeq" id="WP_003619238.1">
    <property type="nucleotide sequence ID" value="NC_008529.1"/>
</dbReference>
<dbReference type="SMR" id="Q04B34"/>
<dbReference type="KEGG" id="lbu:LBUL_0712"/>
<dbReference type="HOGENOM" id="CLU_033732_3_0_9"/>
<dbReference type="BioCyc" id="LDEL321956:LBUL_RS03405-MONOMER"/>
<dbReference type="GO" id="GO:0005829">
    <property type="term" value="C:cytosol"/>
    <property type="evidence" value="ECO:0007669"/>
    <property type="project" value="TreeGrafter"/>
</dbReference>
<dbReference type="GO" id="GO:0005525">
    <property type="term" value="F:GTP binding"/>
    <property type="evidence" value="ECO:0007669"/>
    <property type="project" value="UniProtKB-UniRule"/>
</dbReference>
<dbReference type="GO" id="GO:0046872">
    <property type="term" value="F:metal ion binding"/>
    <property type="evidence" value="ECO:0007669"/>
    <property type="project" value="UniProtKB-KW"/>
</dbReference>
<dbReference type="GO" id="GO:0000917">
    <property type="term" value="P:division septum assembly"/>
    <property type="evidence" value="ECO:0007669"/>
    <property type="project" value="UniProtKB-KW"/>
</dbReference>
<dbReference type="CDD" id="cd01876">
    <property type="entry name" value="YihA_EngB"/>
    <property type="match status" value="1"/>
</dbReference>
<dbReference type="FunFam" id="3.40.50.300:FF:000098">
    <property type="entry name" value="Probable GTP-binding protein EngB"/>
    <property type="match status" value="1"/>
</dbReference>
<dbReference type="Gene3D" id="3.40.50.300">
    <property type="entry name" value="P-loop containing nucleotide triphosphate hydrolases"/>
    <property type="match status" value="1"/>
</dbReference>
<dbReference type="HAMAP" id="MF_00321">
    <property type="entry name" value="GTPase_EngB"/>
    <property type="match status" value="1"/>
</dbReference>
<dbReference type="InterPro" id="IPR030393">
    <property type="entry name" value="G_ENGB_dom"/>
</dbReference>
<dbReference type="InterPro" id="IPR006073">
    <property type="entry name" value="GTP-bd"/>
</dbReference>
<dbReference type="InterPro" id="IPR019987">
    <property type="entry name" value="GTP-bd_ribosome_bio_YsxC"/>
</dbReference>
<dbReference type="InterPro" id="IPR027417">
    <property type="entry name" value="P-loop_NTPase"/>
</dbReference>
<dbReference type="InterPro" id="IPR005225">
    <property type="entry name" value="Small_GTP-bd"/>
</dbReference>
<dbReference type="NCBIfam" id="TIGR03598">
    <property type="entry name" value="GTPase_YsxC"/>
    <property type="match status" value="1"/>
</dbReference>
<dbReference type="NCBIfam" id="TIGR00231">
    <property type="entry name" value="small_GTP"/>
    <property type="match status" value="1"/>
</dbReference>
<dbReference type="PANTHER" id="PTHR11649:SF13">
    <property type="entry name" value="ENGB-TYPE G DOMAIN-CONTAINING PROTEIN"/>
    <property type="match status" value="1"/>
</dbReference>
<dbReference type="PANTHER" id="PTHR11649">
    <property type="entry name" value="MSS1/TRME-RELATED GTP-BINDING PROTEIN"/>
    <property type="match status" value="1"/>
</dbReference>
<dbReference type="Pfam" id="PF01926">
    <property type="entry name" value="MMR_HSR1"/>
    <property type="match status" value="1"/>
</dbReference>
<dbReference type="PRINTS" id="PR00449">
    <property type="entry name" value="RASTRNSFRMNG"/>
</dbReference>
<dbReference type="SUPFAM" id="SSF52540">
    <property type="entry name" value="P-loop containing nucleoside triphosphate hydrolases"/>
    <property type="match status" value="1"/>
</dbReference>
<dbReference type="PROSITE" id="PS51706">
    <property type="entry name" value="G_ENGB"/>
    <property type="match status" value="1"/>
</dbReference>
<name>ENGB_LACDB</name>